<gene>
    <name type="primary">RTC5</name>
    <name type="ORF">Lema_P114850.1</name>
</gene>
<keyword id="KW-0963">Cytoplasm</keyword>
<keyword id="KW-1185">Reference proteome</keyword>
<evidence type="ECO:0000250" key="1"/>
<evidence type="ECO:0000255" key="2">
    <source>
        <dbReference type="PROSITE-ProRule" id="PRU01234"/>
    </source>
</evidence>
<evidence type="ECO:0000256" key="3">
    <source>
        <dbReference type="SAM" id="MobiDB-lite"/>
    </source>
</evidence>
<evidence type="ECO:0000305" key="4"/>
<protein>
    <recommendedName>
        <fullName>Restriction of telomere capping protein 5</fullName>
    </recommendedName>
</protein>
<dbReference type="EMBL" id="FP929126">
    <property type="protein sequence ID" value="CBX95070.1"/>
    <property type="molecule type" value="Genomic_DNA"/>
</dbReference>
<dbReference type="RefSeq" id="XP_003838549.1">
    <property type="nucleotide sequence ID" value="XM_003838501.1"/>
</dbReference>
<dbReference type="SMR" id="E4ZUJ1"/>
<dbReference type="FunCoup" id="E4ZUJ1">
    <property type="interactions" value="5"/>
</dbReference>
<dbReference type="STRING" id="985895.E4ZUJ1"/>
<dbReference type="EnsemblFungi" id="CBX95070">
    <property type="protein sequence ID" value="CBX95070"/>
    <property type="gene ID" value="LEMA_P114850.1"/>
</dbReference>
<dbReference type="GeneID" id="13287616"/>
<dbReference type="VEuPathDB" id="FungiDB:LEMA_P114850.1"/>
<dbReference type="eggNOG" id="ENOG502QV3R">
    <property type="taxonomic scope" value="Eukaryota"/>
</dbReference>
<dbReference type="HOGENOM" id="CLU_011918_1_0_1"/>
<dbReference type="InParanoid" id="E4ZUJ1"/>
<dbReference type="OMA" id="KWEFEAR"/>
<dbReference type="OrthoDB" id="289228at2759"/>
<dbReference type="Proteomes" id="UP000002668">
    <property type="component" value="Genome"/>
</dbReference>
<dbReference type="GO" id="GO:0005737">
    <property type="term" value="C:cytoplasm"/>
    <property type="evidence" value="ECO:0007669"/>
    <property type="project" value="UniProtKB-SubCell"/>
</dbReference>
<dbReference type="GO" id="GO:0005634">
    <property type="term" value="C:nucleus"/>
    <property type="evidence" value="ECO:0007669"/>
    <property type="project" value="TreeGrafter"/>
</dbReference>
<dbReference type="GO" id="GO:0006979">
    <property type="term" value="P:response to oxidative stress"/>
    <property type="evidence" value="ECO:0007669"/>
    <property type="project" value="TreeGrafter"/>
</dbReference>
<dbReference type="InterPro" id="IPR006571">
    <property type="entry name" value="TLDc_dom"/>
</dbReference>
<dbReference type="PANTHER" id="PTHR23354">
    <property type="entry name" value="NUCLEOLAR PROTEIN 7/ESTROGEN RECEPTOR COACTIVATOR-RELATED"/>
    <property type="match status" value="1"/>
</dbReference>
<dbReference type="PANTHER" id="PTHR23354:SF130">
    <property type="entry name" value="RESTRICTION OF TELOMERE CAPPING PROTEIN 5"/>
    <property type="match status" value="1"/>
</dbReference>
<dbReference type="Pfam" id="PF07534">
    <property type="entry name" value="TLD"/>
    <property type="match status" value="1"/>
</dbReference>
<dbReference type="SMART" id="SM00584">
    <property type="entry name" value="TLDc"/>
    <property type="match status" value="1"/>
</dbReference>
<dbReference type="PROSITE" id="PS51886">
    <property type="entry name" value="TLDC"/>
    <property type="match status" value="1"/>
</dbReference>
<reference key="1">
    <citation type="journal article" date="2011" name="Nat. Commun.">
        <title>Effector diversification within compartments of the Leptosphaeria maculans genome affected by Repeat-Induced Point mutations.</title>
        <authorList>
            <person name="Rouxel T."/>
            <person name="Grandaubert J."/>
            <person name="Hane J.K."/>
            <person name="Hoede C."/>
            <person name="van de Wouw A.P."/>
            <person name="Couloux A."/>
            <person name="Dominguez V."/>
            <person name="Anthouard V."/>
            <person name="Bally P."/>
            <person name="Bourras S."/>
            <person name="Cozijnsen A.J."/>
            <person name="Ciuffetti L.M."/>
            <person name="Degrave A."/>
            <person name="Dilmaghani A."/>
            <person name="Duret L."/>
            <person name="Fudal I."/>
            <person name="Goodwin S.B."/>
            <person name="Gout L."/>
            <person name="Glaser N."/>
            <person name="Linglin J."/>
            <person name="Kema G.H.J."/>
            <person name="Lapalu N."/>
            <person name="Lawrence C.B."/>
            <person name="May K."/>
            <person name="Meyer M."/>
            <person name="Ollivier B."/>
            <person name="Poulain J."/>
            <person name="Schoch C.L."/>
            <person name="Simon A."/>
            <person name="Spatafora J.W."/>
            <person name="Stachowiak A."/>
            <person name="Turgeon B.G."/>
            <person name="Tyler B.M."/>
            <person name="Vincent D."/>
            <person name="Weissenbach J."/>
            <person name="Amselem J."/>
            <person name="Quesneville H."/>
            <person name="Oliver R.P."/>
            <person name="Wincker P."/>
            <person name="Balesdent M.-H."/>
            <person name="Howlett B.J."/>
        </authorList>
    </citation>
    <scope>NUCLEOTIDE SEQUENCE [LARGE SCALE GENOMIC DNA]</scope>
    <source>
        <strain>JN3 / isolate v23.1.3 / race Av1-4-5-6-7-8</strain>
    </source>
</reference>
<feature type="chain" id="PRO_0000408828" description="Restriction of telomere capping protein 5">
    <location>
        <begin position="1"/>
        <end position="623"/>
    </location>
</feature>
<feature type="domain" description="TLDc" evidence="2">
    <location>
        <begin position="339"/>
        <end position="568"/>
    </location>
</feature>
<feature type="region of interest" description="Disordered" evidence="3">
    <location>
        <begin position="144"/>
        <end position="179"/>
    </location>
</feature>
<feature type="region of interest" description="Disordered" evidence="3">
    <location>
        <begin position="307"/>
        <end position="328"/>
    </location>
</feature>
<feature type="compositionally biased region" description="Acidic residues" evidence="3">
    <location>
        <begin position="169"/>
        <end position="179"/>
    </location>
</feature>
<proteinExistence type="inferred from homology"/>
<accession>E4ZUJ1</accession>
<comment type="function">
    <text evidence="1">May be involved in a process influencing telomere capping.</text>
</comment>
<comment type="subcellular location">
    <subcellularLocation>
        <location evidence="1">Cytoplasm</location>
    </subcellularLocation>
</comment>
<comment type="similarity">
    <text evidence="4">Belongs to the RTC5 family.</text>
</comment>
<name>RTC5_LEPMJ</name>
<organism>
    <name type="scientific">Leptosphaeria maculans (strain JN3 / isolate v23.1.3 / race Av1-4-5-6-7-8)</name>
    <name type="common">Blackleg fungus</name>
    <name type="synonym">Phoma lingam</name>
    <dbReference type="NCBI Taxonomy" id="985895"/>
    <lineage>
        <taxon>Eukaryota</taxon>
        <taxon>Fungi</taxon>
        <taxon>Dikarya</taxon>
        <taxon>Ascomycota</taxon>
        <taxon>Pezizomycotina</taxon>
        <taxon>Dothideomycetes</taxon>
        <taxon>Pleosporomycetidae</taxon>
        <taxon>Pleosporales</taxon>
        <taxon>Pleosporineae</taxon>
        <taxon>Leptosphaeriaceae</taxon>
        <taxon>Plenodomus</taxon>
        <taxon>Plenodomus lingam/Leptosphaeria maculans species complex</taxon>
    </lineage>
</organism>
<sequence length="623" mass="69199">MGQGSSHDAPHLTPEQLSHTLAQRFASKSYTPLELYCFSTVFRSLADTSSGVRYWSEPTLCRFLELPDALGVGSVLFQMCSYLGAFPLPSQAPAILTQEALLKVVTILTERYGSVIKRRGRELWLRELYRGLAVYDRGVSASIEEEHEREAQPVATEGESSGMGFAIDAPEDGEGDEDEDDELVLAALDSMDAVEVFKQGEQANVHHSIIPTDNFLKLVELLLLIAPIDAQQSLSSLAPELSDERVEELRRVAHVIVSAFGVENHPGVTYRTFNTVISAALPYLFNGLNPLFEHFLFAKDFDLSKRKNDPSSPSQDTHPVIPPPKTVMDPEPLLPQPGEILNLTLLSQLSFFLKGNTLFRRLRPLYSGNNHGFSMGSFEKQVFNWRAPTILLVKGRVLPATPSNTRERALQDMLPPKRLPNSVPESQENQTLIYGAYIPTQWKHTGKTCFGDESTVLFQLSPTHDVFKASKFSTDYVYFNKSPTQPPGIGLGTPIPTQSSAHTHSSHSQTLFRPGPVSLHLDDALEFGIFTHVSDGGGSFHPSALPVRKRRDWQDRFEIESLEVWGCGGDEVAEAQRKEWAWQEREAEARRRINLGTGDQELDRELLKMAGIISGDRSGGSMG</sequence>